<proteinExistence type="evidence at protein level"/>
<organism>
    <name type="scientific">Human adenovirus C serotype 2</name>
    <name type="common">HAdV-2</name>
    <name type="synonym">Human adenovirus 2</name>
    <dbReference type="NCBI Taxonomy" id="10515"/>
    <lineage>
        <taxon>Viruses</taxon>
        <taxon>Varidnaviria</taxon>
        <taxon>Bamfordvirae</taxon>
        <taxon>Preplasmiviricota</taxon>
        <taxon>Tectiliviricetes</taxon>
        <taxon>Rowavirales</taxon>
        <taxon>Adenoviridae</taxon>
        <taxon>Mastadenovirus</taxon>
        <taxon>Human mastadenovirus C</taxon>
    </lineage>
</organism>
<gene>
    <name evidence="1" type="primary">IX</name>
</gene>
<dbReference type="EMBL" id="J01917">
    <property type="protein sequence ID" value="AAA92204.1"/>
    <property type="molecule type" value="Genomic_DNA"/>
</dbReference>
<dbReference type="PIR" id="C03853">
    <property type="entry name" value="SXAD92"/>
</dbReference>
<dbReference type="RefSeq" id="AP_000164.1">
    <property type="nucleotide sequence ID" value="AC_000007.1"/>
</dbReference>
<dbReference type="RefSeq" id="NP_040514.1">
    <property type="nucleotide sequence ID" value="NC_001405.1"/>
</dbReference>
<dbReference type="SMR" id="P03282"/>
<dbReference type="DIP" id="DIP-29897N"/>
<dbReference type="iPTMnet" id="P03282"/>
<dbReference type="GeneID" id="2653012"/>
<dbReference type="KEGG" id="vg:2653012"/>
<dbReference type="Proteomes" id="UP000008167">
    <property type="component" value="Segment"/>
</dbReference>
<dbReference type="GO" id="GO:0042025">
    <property type="term" value="C:host cell nucleus"/>
    <property type="evidence" value="ECO:0007669"/>
    <property type="project" value="UniProtKB-SubCell"/>
</dbReference>
<dbReference type="GO" id="GO:0098021">
    <property type="term" value="C:viral capsid, decoration"/>
    <property type="evidence" value="ECO:0007669"/>
    <property type="project" value="UniProtKB-UniRule"/>
</dbReference>
<dbReference type="GO" id="GO:0031423">
    <property type="term" value="F:hexon binding"/>
    <property type="evidence" value="ECO:0007669"/>
    <property type="project" value="InterPro"/>
</dbReference>
<dbReference type="GO" id="GO:0046718">
    <property type="term" value="P:symbiont entry into host cell"/>
    <property type="evidence" value="ECO:0007669"/>
    <property type="project" value="UniProtKB-UniRule"/>
</dbReference>
<dbReference type="GO" id="GO:0019061">
    <property type="term" value="P:uncoating of virus"/>
    <property type="evidence" value="ECO:0000314"/>
    <property type="project" value="UniProtKB"/>
</dbReference>
<dbReference type="Gene3D" id="6.10.250.3040">
    <property type="match status" value="1"/>
</dbReference>
<dbReference type="HAMAP" id="MF_04050">
    <property type="entry name" value="ADV_CAP9"/>
    <property type="match status" value="1"/>
</dbReference>
<dbReference type="InterPro" id="IPR005641">
    <property type="entry name" value="Hexon_assoc_IX"/>
</dbReference>
<dbReference type="Pfam" id="PF03955">
    <property type="entry name" value="Adeno_PIX"/>
    <property type="match status" value="1"/>
</dbReference>
<evidence type="ECO:0000255" key="1">
    <source>
        <dbReference type="HAMAP-Rule" id="MF_04050"/>
    </source>
</evidence>
<evidence type="ECO:0000269" key="2">
    <source>
    </source>
</evidence>
<evidence type="ECO:0000269" key="3">
    <source>
    </source>
</evidence>
<evidence type="ECO:0000305" key="4"/>
<reference key="1">
    <citation type="journal article" date="1980" name="Cell">
        <title>The gene for polypeptide IX of adenovirus type 2 and its unspliced messenger RNA.</title>
        <authorList>
            <person name="Alestroem P."/>
            <person name="Akusjaervi G."/>
            <person name="Perricaudet M."/>
            <person name="Mathews M.B."/>
            <person name="Klessig D.F."/>
            <person name="Pettersson U."/>
        </authorList>
    </citation>
    <scope>NUCLEOTIDE SEQUENCE [GENOMIC DNA]</scope>
</reference>
<reference key="2">
    <citation type="journal article" date="1982" name="J. Biol. Chem.">
        <title>Nucleotide sequences from the adenovirus-2 genome.</title>
        <authorList>
            <person name="Gingeras T.R."/>
            <person name="Sciaky D."/>
            <person name="Gelinas R.E."/>
            <person name="Bing-Dong J."/>
            <person name="Yen C.E."/>
            <person name="Kelly M.M."/>
            <person name="Bullock P.A."/>
            <person name="Parsons B.L."/>
            <person name="O'Neill K.E."/>
            <person name="Roberts R.J."/>
        </authorList>
    </citation>
    <scope>NUCLEOTIDE SEQUENCE [GENOMIC DNA]</scope>
</reference>
<reference key="3">
    <citation type="journal article" date="2012" name="Virology">
        <title>The phosphoproteome of the adenovirus type 2 virion.</title>
        <authorList>
            <person name="Bergstrom Lind S."/>
            <person name="Artemenko K.A."/>
            <person name="Elfineh L."/>
            <person name="Zhao Y."/>
            <person name="Bergquist J."/>
            <person name="Pettersson U."/>
        </authorList>
    </citation>
    <scope>PROTEIN SEQUENCE OF 126-140</scope>
    <scope>PHOSPHORYLATION AT SER-135</scope>
</reference>
<reference key="4">
    <citation type="journal article" date="2011" name="Cell Host Microbe">
        <title>Kinesin-1-mediated capsid disassembly and disruption of the nuclear pore complex promote virus infection.</title>
        <authorList>
            <person name="Strunze S."/>
            <person name="Engelke M.F."/>
            <person name="Wang I.H."/>
            <person name="Puntener D."/>
            <person name="Boucke K."/>
            <person name="Schleich S."/>
            <person name="Way M."/>
            <person name="Schoenenberger P."/>
            <person name="Burckhardt C.J."/>
            <person name="Greber U.F."/>
        </authorList>
    </citation>
    <scope>FUNCTION</scope>
    <scope>INTERACTION WITH KLC1</scope>
</reference>
<reference key="5">
    <citation type="journal article" date="2012" name="Viruses">
        <title>Latest insights on adenovirus structure and assembly.</title>
        <authorList>
            <person name="San Martin C."/>
        </authorList>
    </citation>
    <scope>REVIEW</scope>
</reference>
<name>CAP9_ADE02</name>
<keyword id="KW-1232">Capsid decoration protein</keyword>
<keyword id="KW-0167">Capsid protein</keyword>
<keyword id="KW-0175">Coiled coil</keyword>
<keyword id="KW-0903">Direct protein sequencing</keyword>
<keyword id="KW-1048">Host nucleus</keyword>
<keyword id="KW-0945">Host-virus interaction</keyword>
<keyword id="KW-0597">Phosphoprotein</keyword>
<keyword id="KW-1185">Reference proteome</keyword>
<keyword id="KW-0946">Virion</keyword>
<keyword id="KW-1160">Virus entry into host cell</keyword>
<protein>
    <recommendedName>
        <fullName evidence="1">Hexon-interlacing protein</fullName>
    </recommendedName>
    <alternativeName>
        <fullName evidence="1">Protein IX</fullName>
    </alternativeName>
</protein>
<feature type="chain" id="PRO_0000221844" description="Hexon-interlacing protein" evidence="1">
    <location>
        <begin position="1"/>
        <end position="140"/>
    </location>
</feature>
<feature type="coiled-coil region" evidence="1">
    <location>
        <begin position="100"/>
        <end position="127"/>
    </location>
</feature>
<feature type="modified residue" description="Phosphoserine; by host" evidence="3">
    <location>
        <position position="135"/>
    </location>
</feature>
<organismHost>
    <name type="scientific">Homo sapiens</name>
    <name type="common">Human</name>
    <dbReference type="NCBI Taxonomy" id="9606"/>
</organismHost>
<accession>P03282</accession>
<comment type="function">
    <text evidence="1 2">Structural component of the virion that forms triskelion structures consisting of three molecules that stabilize three hexon trimers at the center of each icosahedral facet and fixes the peripentonal hexons (By similarity). Dispensable for assembly. During virus entry, recruits the anterograde motor kinesin-1 to the capsid docked at the nuclear pore complex thereby subjecting the docked capsid to a pulling force (PubMed:21925109). The resulting tension leads to capsid disruption, dispersion of capsid fragments toward cell periphery and eventually viral DNA entry into the host nucleus (PubMed:21925109).</text>
</comment>
<comment type="subunit">
    <text evidence="1 2">Homotrimer (By similarity). Interacts with hexon protein; this interaction tethers the hexons together (By similarity). Self-interacts with adjacent proteins (By similarity). Interacts with kinesin light chain KLC1; this interaction leads to capsid disruption at the nuclear pore complex during virus entry into host cell (PubMed:21925109).</text>
</comment>
<comment type="subcellular location">
    <subcellularLocation>
        <location evidence="1">Virion</location>
    </subcellularLocation>
    <subcellularLocation>
        <location evidence="1">Host nucleus</location>
    </subcellularLocation>
    <text evidence="1">Located in the canyons between the hexons on the outer surface of the capsid. Forms a sort of hairnet on the outer side of the virion. Present in 240 copies per virion.</text>
</comment>
<comment type="induction">
    <text evidence="1">Expressed in the intermediate phase of the viral replicative cycle.</text>
</comment>
<comment type="domain">
    <text evidence="1">Three N-terminal domains of hexon-interlacing protein form triskelions between hexon capsomers.</text>
</comment>
<comment type="miscellaneous">
    <text evidence="1">This protein is only encoded by mastadenoviruses, and may therefore play a role in mammals tropism.</text>
</comment>
<comment type="similarity">
    <text evidence="1 4">Belongs to the adenoviridae hexon-interlacing protein family.</text>
</comment>
<sequence>MSANSFDGSIVSSYLTTRMPPWAGVRQNVMGSSIDGRPVLPANSTTLTYETVSGTPLETAASAAASAAAATARGIVTDFAFLSPLASSAASRSSARDDKLTALLAQLDSLTRELNVVSQQLLDLRQQVSALKASSPPNAV</sequence>